<organism>
    <name type="scientific">Pseudomonas putida (strain W619)</name>
    <dbReference type="NCBI Taxonomy" id="390235"/>
    <lineage>
        <taxon>Bacteria</taxon>
        <taxon>Pseudomonadati</taxon>
        <taxon>Pseudomonadota</taxon>
        <taxon>Gammaproteobacteria</taxon>
        <taxon>Pseudomonadales</taxon>
        <taxon>Pseudomonadaceae</taxon>
        <taxon>Pseudomonas</taxon>
    </lineage>
</organism>
<feature type="chain" id="PRO_1000125834" description="Putative nickel-responsive regulator">
    <location>
        <begin position="1"/>
        <end position="138"/>
    </location>
</feature>
<feature type="binding site" evidence="1">
    <location>
        <position position="76"/>
    </location>
    <ligand>
        <name>Ni(2+)</name>
        <dbReference type="ChEBI" id="CHEBI:49786"/>
    </ligand>
</feature>
<feature type="binding site" evidence="1">
    <location>
        <position position="87"/>
    </location>
    <ligand>
        <name>Ni(2+)</name>
        <dbReference type="ChEBI" id="CHEBI:49786"/>
    </ligand>
</feature>
<feature type="binding site" evidence="1">
    <location>
        <position position="89"/>
    </location>
    <ligand>
        <name>Ni(2+)</name>
        <dbReference type="ChEBI" id="CHEBI:49786"/>
    </ligand>
</feature>
<feature type="binding site" evidence="1">
    <location>
        <position position="95"/>
    </location>
    <ligand>
        <name>Ni(2+)</name>
        <dbReference type="ChEBI" id="CHEBI:49786"/>
    </ligand>
</feature>
<name>NIKR_PSEPW</name>
<gene>
    <name type="ordered locus">PputW619_3004</name>
</gene>
<protein>
    <recommendedName>
        <fullName evidence="1">Putative nickel-responsive regulator</fullName>
    </recommendedName>
</protein>
<keyword id="KW-0238">DNA-binding</keyword>
<keyword id="KW-0479">Metal-binding</keyword>
<keyword id="KW-0533">Nickel</keyword>
<keyword id="KW-0804">Transcription</keyword>
<keyword id="KW-0805">Transcription regulation</keyword>
<accession>B1J9R7</accession>
<reference key="1">
    <citation type="submission" date="2008-02" db="EMBL/GenBank/DDBJ databases">
        <title>Complete sequence of Pseudomonas putida W619.</title>
        <authorList>
            <person name="Copeland A."/>
            <person name="Lucas S."/>
            <person name="Lapidus A."/>
            <person name="Barry K."/>
            <person name="Detter J.C."/>
            <person name="Glavina del Rio T."/>
            <person name="Dalin E."/>
            <person name="Tice H."/>
            <person name="Pitluck S."/>
            <person name="Chain P."/>
            <person name="Malfatti S."/>
            <person name="Shin M."/>
            <person name="Vergez L."/>
            <person name="Schmutz J."/>
            <person name="Larimer F."/>
            <person name="Land M."/>
            <person name="Hauser L."/>
            <person name="Kyrpides N."/>
            <person name="Kim E."/>
            <person name="Taghavi S."/>
            <person name="Vangronsveld D."/>
            <person name="van der Lelie D."/>
            <person name="Richardson P."/>
        </authorList>
    </citation>
    <scope>NUCLEOTIDE SEQUENCE [LARGE SCALE GENOMIC DNA]</scope>
    <source>
        <strain>W619</strain>
    </source>
</reference>
<evidence type="ECO:0000255" key="1">
    <source>
        <dbReference type="HAMAP-Rule" id="MF_00476"/>
    </source>
</evidence>
<dbReference type="EMBL" id="CP000949">
    <property type="protein sequence ID" value="ACA73496.1"/>
    <property type="molecule type" value="Genomic_DNA"/>
</dbReference>
<dbReference type="SMR" id="B1J9R7"/>
<dbReference type="STRING" id="390235.PputW619_3004"/>
<dbReference type="KEGG" id="ppw:PputW619_3004"/>
<dbReference type="eggNOG" id="COG0864">
    <property type="taxonomic scope" value="Bacteria"/>
</dbReference>
<dbReference type="HOGENOM" id="CLU_113319_1_4_6"/>
<dbReference type="OrthoDB" id="9806294at2"/>
<dbReference type="GO" id="GO:0003677">
    <property type="term" value="F:DNA binding"/>
    <property type="evidence" value="ECO:0007669"/>
    <property type="project" value="UniProtKB-KW"/>
</dbReference>
<dbReference type="GO" id="GO:0003700">
    <property type="term" value="F:DNA-binding transcription factor activity"/>
    <property type="evidence" value="ECO:0007669"/>
    <property type="project" value="UniProtKB-UniRule"/>
</dbReference>
<dbReference type="GO" id="GO:0016151">
    <property type="term" value="F:nickel cation binding"/>
    <property type="evidence" value="ECO:0007669"/>
    <property type="project" value="UniProtKB-UniRule"/>
</dbReference>
<dbReference type="GO" id="GO:0010045">
    <property type="term" value="P:response to nickel cation"/>
    <property type="evidence" value="ECO:0007669"/>
    <property type="project" value="InterPro"/>
</dbReference>
<dbReference type="CDD" id="cd22231">
    <property type="entry name" value="RHH_NikR_HicB-like"/>
    <property type="match status" value="1"/>
</dbReference>
<dbReference type="Gene3D" id="3.30.70.1150">
    <property type="entry name" value="ACT-like. Chain A, domain 2"/>
    <property type="match status" value="1"/>
</dbReference>
<dbReference type="Gene3D" id="1.10.1220.10">
    <property type="entry name" value="Met repressor-like"/>
    <property type="match status" value="1"/>
</dbReference>
<dbReference type="HAMAP" id="MF_00476">
    <property type="entry name" value="NikR"/>
    <property type="match status" value="1"/>
</dbReference>
<dbReference type="InterPro" id="IPR027271">
    <property type="entry name" value="Acetolactate_synth/TF_NikR_C"/>
</dbReference>
<dbReference type="InterPro" id="IPR045865">
    <property type="entry name" value="ACT-like_dom_sf"/>
</dbReference>
<dbReference type="InterPro" id="IPR013321">
    <property type="entry name" value="Arc_rbn_hlx_hlx"/>
</dbReference>
<dbReference type="InterPro" id="IPR002145">
    <property type="entry name" value="CopG"/>
</dbReference>
<dbReference type="InterPro" id="IPR050192">
    <property type="entry name" value="CopG/NikR_regulator"/>
</dbReference>
<dbReference type="InterPro" id="IPR022988">
    <property type="entry name" value="Ni_resp_reg_NikR"/>
</dbReference>
<dbReference type="InterPro" id="IPR014160">
    <property type="entry name" value="Nickel_NikR_proteobac"/>
</dbReference>
<dbReference type="InterPro" id="IPR010985">
    <property type="entry name" value="Ribbon_hlx_hlx"/>
</dbReference>
<dbReference type="InterPro" id="IPR014864">
    <property type="entry name" value="TF_NikR_Ni-bd_C"/>
</dbReference>
<dbReference type="NCBIfam" id="TIGR02793">
    <property type="entry name" value="nikR"/>
    <property type="match status" value="1"/>
</dbReference>
<dbReference type="NCBIfam" id="NF002815">
    <property type="entry name" value="PRK02967.1"/>
    <property type="match status" value="1"/>
</dbReference>
<dbReference type="NCBIfam" id="NF003381">
    <property type="entry name" value="PRK04460.1"/>
    <property type="match status" value="1"/>
</dbReference>
<dbReference type="PANTHER" id="PTHR34719">
    <property type="entry name" value="NICKEL-RESPONSIVE REGULATOR"/>
    <property type="match status" value="1"/>
</dbReference>
<dbReference type="PANTHER" id="PTHR34719:SF2">
    <property type="entry name" value="NICKEL-RESPONSIVE REGULATOR"/>
    <property type="match status" value="1"/>
</dbReference>
<dbReference type="Pfam" id="PF08753">
    <property type="entry name" value="NikR_C"/>
    <property type="match status" value="1"/>
</dbReference>
<dbReference type="Pfam" id="PF01402">
    <property type="entry name" value="RHH_1"/>
    <property type="match status" value="1"/>
</dbReference>
<dbReference type="SUPFAM" id="SSF55021">
    <property type="entry name" value="ACT-like"/>
    <property type="match status" value="1"/>
</dbReference>
<dbReference type="SUPFAM" id="SSF47598">
    <property type="entry name" value="Ribbon-helix-helix"/>
    <property type="match status" value="1"/>
</dbReference>
<sequence>MQRITITLDEELLDVIDRRVASQGYQGRSEAIRDLLRAGMRESEALPDDAACVAVVSYLYDHSTRELPRRLNQTLHAHHDLTRSTLHVHLDAGHCLEVSVLQGESGRIGELSRQLMVERGVEHGQVQVMPAPGQAKVR</sequence>
<comment type="function">
    <text evidence="1">Transcriptional regulator.</text>
</comment>
<comment type="cofactor">
    <cofactor evidence="1">
        <name>Ni(2+)</name>
        <dbReference type="ChEBI" id="CHEBI:49786"/>
    </cofactor>
    <text evidence="1">Binds 1 nickel ion per subunit.</text>
</comment>
<comment type="similarity">
    <text evidence="1">Belongs to the transcriptional regulatory CopG/NikR family.</text>
</comment>
<proteinExistence type="inferred from homology"/>